<organism>
    <name type="scientific">Drosophila melanogaster</name>
    <name type="common">Fruit fly</name>
    <dbReference type="NCBI Taxonomy" id="7227"/>
    <lineage>
        <taxon>Eukaryota</taxon>
        <taxon>Metazoa</taxon>
        <taxon>Ecdysozoa</taxon>
        <taxon>Arthropoda</taxon>
        <taxon>Hexapoda</taxon>
        <taxon>Insecta</taxon>
        <taxon>Pterygota</taxon>
        <taxon>Neoptera</taxon>
        <taxon>Endopterygota</taxon>
        <taxon>Diptera</taxon>
        <taxon>Brachycera</taxon>
        <taxon>Muscomorpha</taxon>
        <taxon>Ephydroidea</taxon>
        <taxon>Drosophilidae</taxon>
        <taxon>Drosophila</taxon>
        <taxon>Sophophora</taxon>
    </lineage>
</organism>
<evidence type="ECO:0000250" key="1"/>
<evidence type="ECO:0000255" key="2"/>
<evidence type="ECO:0000256" key="3">
    <source>
        <dbReference type="SAM" id="MobiDB-lite"/>
    </source>
</evidence>
<evidence type="ECO:0000269" key="4">
    <source>
    </source>
</evidence>
<evidence type="ECO:0000305" key="5"/>
<gene>
    <name type="primary">Rpt2</name>
    <name type="synonym">P26s4</name>
    <name type="synonym">Pros26.4</name>
    <name type="ORF">CG5289</name>
</gene>
<sequence length="439" mass="49324">MGQNQSAQGGAGEKKDDKDKKKKYEPPIPTRVGKKKRRAKGPDAAMKLPQVTPHTRCRLKLLKLERIKDYLMMEDEFIRNQERLKPQDEKNEEERSKVDDLRGTPMSVGNLEEIIDDNHAIVSTSVGSEHYVSILSFVDKDQLEPGCSVLLNHKVHAVVGVLSDDTDPMVTVMKLEKAPQETYADIGGLDTQIQEIKESVELPLTHPEYYEEMGIKPPKGVILYGPPGTGKTLLAKAVANQTSATFLRVVGSELIQKYLGDGPKLVRELFRVAEEHAPSIVFIDEIDAVGTKRYDSNSGGEREIQRTMLELLNQLDGFDSRGDVKVIMATNRIETLDPALIRPGRIDRKIEFPLPDEKTKRRIFTIHTSRMTLAEDVNLSELIMAKDDLSGADIKAICTEAGLMALRERRMKVTNEDFKKSKESVLYRKKEGTPEGLYL</sequence>
<accession>P48601</accession>
<accession>Q9VCG1</accession>
<name>PRS4_DROME</name>
<dbReference type="EMBL" id="U39303">
    <property type="protein sequence ID" value="AAB34134.1"/>
    <property type="molecule type" value="mRNA"/>
</dbReference>
<dbReference type="EMBL" id="AE014297">
    <property type="protein sequence ID" value="AAF56205.1"/>
    <property type="molecule type" value="Genomic_DNA"/>
</dbReference>
<dbReference type="EMBL" id="AY058759">
    <property type="protein sequence ID" value="AAL13988.1"/>
    <property type="molecule type" value="mRNA"/>
</dbReference>
<dbReference type="RefSeq" id="NP_001287493.1">
    <property type="nucleotide sequence ID" value="NM_001300564.1"/>
</dbReference>
<dbReference type="RefSeq" id="NP_524469.2">
    <property type="nucleotide sequence ID" value="NM_079745.4"/>
</dbReference>
<dbReference type="SMR" id="P48601"/>
<dbReference type="BioGRID" id="67764">
    <property type="interactions" value="65"/>
</dbReference>
<dbReference type="ComplexPortal" id="CPX-9070">
    <property type="entry name" value="26S proteasome complex"/>
</dbReference>
<dbReference type="ComplexPortal" id="CPX-9087">
    <property type="entry name" value="26S proteasome complex, testis-specific variant"/>
</dbReference>
<dbReference type="DIP" id="DIP-17276N"/>
<dbReference type="FunCoup" id="P48601">
    <property type="interactions" value="1411"/>
</dbReference>
<dbReference type="IntAct" id="P48601">
    <property type="interactions" value="105"/>
</dbReference>
<dbReference type="STRING" id="7227.FBpp0311982"/>
<dbReference type="MoonDB" id="P48601">
    <property type="type" value="Predicted"/>
</dbReference>
<dbReference type="PaxDb" id="7227-FBpp0083906"/>
<dbReference type="DNASU" id="42828"/>
<dbReference type="EnsemblMetazoa" id="FBtr0084520">
    <property type="protein sequence ID" value="FBpp0083906"/>
    <property type="gene ID" value="FBgn0015282"/>
</dbReference>
<dbReference type="EnsemblMetazoa" id="FBtr0346154">
    <property type="protein sequence ID" value="FBpp0311982"/>
    <property type="gene ID" value="FBgn0015282"/>
</dbReference>
<dbReference type="GeneID" id="42828"/>
<dbReference type="KEGG" id="dme:Dmel_CG5289"/>
<dbReference type="AGR" id="FB:FBgn0015282"/>
<dbReference type="CTD" id="42828"/>
<dbReference type="FlyBase" id="FBgn0015282">
    <property type="gene designation" value="Rpt2"/>
</dbReference>
<dbReference type="VEuPathDB" id="VectorBase:FBgn0015282"/>
<dbReference type="eggNOG" id="KOG0726">
    <property type="taxonomic scope" value="Eukaryota"/>
</dbReference>
<dbReference type="GeneTree" id="ENSGT01020000230346"/>
<dbReference type="HOGENOM" id="CLU_000688_2_3_1"/>
<dbReference type="InParanoid" id="P48601"/>
<dbReference type="OMA" id="QDDTDPM"/>
<dbReference type="OrthoDB" id="10255768at2759"/>
<dbReference type="PhylomeDB" id="P48601"/>
<dbReference type="BRENDA" id="3.4.25.1">
    <property type="organism ID" value="1994"/>
</dbReference>
<dbReference type="Reactome" id="R-DME-1169091">
    <property type="pathway name" value="Activation of NF-kappaB in B cells"/>
</dbReference>
<dbReference type="Reactome" id="R-DME-1234176">
    <property type="pathway name" value="Oxygen-dependent proline hydroxylation of Hypoxia-inducible Factor Alpha"/>
</dbReference>
<dbReference type="Reactome" id="R-DME-1236978">
    <property type="pathway name" value="Cross-presentation of soluble exogenous antigens (endosomes)"/>
</dbReference>
<dbReference type="Reactome" id="R-DME-174084">
    <property type="pathway name" value="Autodegradation of Cdh1 by Cdh1:APC/C"/>
</dbReference>
<dbReference type="Reactome" id="R-DME-174154">
    <property type="pathway name" value="APC/C:Cdc20 mediated degradation of Securin"/>
</dbReference>
<dbReference type="Reactome" id="R-DME-174178">
    <property type="pathway name" value="APC/C:Cdh1 mediated degradation of Cdc20 and other APC/C:Cdh1 targeted proteins in late mitosis/early G1"/>
</dbReference>
<dbReference type="Reactome" id="R-DME-174184">
    <property type="pathway name" value="Cdc20:Phospho-APC/C mediated degradation of Cyclin A"/>
</dbReference>
<dbReference type="Reactome" id="R-DME-187577">
    <property type="pathway name" value="SCF(Skp2)-mediated degradation of p27/p21"/>
</dbReference>
<dbReference type="Reactome" id="R-DME-195253">
    <property type="pathway name" value="Degradation of beta-catenin by the destruction complex"/>
</dbReference>
<dbReference type="Reactome" id="R-DME-202424">
    <property type="pathway name" value="Downstream TCR signaling"/>
</dbReference>
<dbReference type="Reactome" id="R-DME-209360">
    <property type="pathway name" value="Ubiquitination and proteolysis of phosphorylated CI"/>
</dbReference>
<dbReference type="Reactome" id="R-DME-209406">
    <property type="pathway name" value="Degradation of NF-kappa-B inhibitor, CACT"/>
</dbReference>
<dbReference type="Reactome" id="R-DME-209461">
    <property type="pathway name" value="Ubiquitination and degradation of phosphorylated ARM"/>
</dbReference>
<dbReference type="Reactome" id="R-DME-216167">
    <property type="pathway name" value="Nuclear CI is degraded"/>
</dbReference>
<dbReference type="Reactome" id="R-DME-2467813">
    <property type="pathway name" value="Separation of Sister Chromatids"/>
</dbReference>
<dbReference type="Reactome" id="R-DME-2871837">
    <property type="pathway name" value="FCERI mediated NF-kB activation"/>
</dbReference>
<dbReference type="Reactome" id="R-DME-350562">
    <property type="pathway name" value="Regulation of ornithine decarboxylase (ODC)"/>
</dbReference>
<dbReference type="Reactome" id="R-DME-382556">
    <property type="pathway name" value="ABC-family proteins mediated transport"/>
</dbReference>
<dbReference type="Reactome" id="R-DME-432395">
    <property type="pathway name" value="Degradation of TIM"/>
</dbReference>
<dbReference type="Reactome" id="R-DME-432524">
    <property type="pathway name" value="Degradation of PER"/>
</dbReference>
<dbReference type="Reactome" id="R-DME-432626">
    <property type="pathway name" value="Circadian Clock pathway"/>
</dbReference>
<dbReference type="Reactome" id="R-DME-450408">
    <property type="pathway name" value="AUF1 (hnRNP D0) binds and destabilizes mRNA"/>
</dbReference>
<dbReference type="Reactome" id="R-DME-4608870">
    <property type="pathway name" value="Asymmetric localization of PCP proteins"/>
</dbReference>
<dbReference type="Reactome" id="R-DME-4641257">
    <property type="pathway name" value="Degradation of AXIN"/>
</dbReference>
<dbReference type="Reactome" id="R-DME-4641258">
    <property type="pathway name" value="Degradation of DVL"/>
</dbReference>
<dbReference type="Reactome" id="R-DME-532668">
    <property type="pathway name" value="N-glycan trimming in the ER and Calnexin/Calreticulin cycle"/>
</dbReference>
<dbReference type="Reactome" id="R-DME-5358346">
    <property type="pathway name" value="Hedgehog ligand biogenesis"/>
</dbReference>
<dbReference type="Reactome" id="R-DME-538864">
    <property type="pathway name" value="Degradation of CRY"/>
</dbReference>
<dbReference type="Reactome" id="R-DME-5607761">
    <property type="pathway name" value="Dectin-1 mediated noncanonical NF-kB signaling"/>
</dbReference>
<dbReference type="Reactome" id="R-DME-5607764">
    <property type="pathway name" value="CLEC7A (Dectin-1) signaling"/>
</dbReference>
<dbReference type="Reactome" id="R-DME-5610780">
    <property type="pathway name" value="Degradation of GLI1 by the proteasome"/>
</dbReference>
<dbReference type="Reactome" id="R-DME-5610785">
    <property type="pathway name" value="GLI3 is processed to GLI3R by the proteasome"/>
</dbReference>
<dbReference type="Reactome" id="R-DME-5632684">
    <property type="pathway name" value="Hedgehog 'on' state"/>
</dbReference>
<dbReference type="Reactome" id="R-DME-5658442">
    <property type="pathway name" value="Regulation of RAS by GAPs"/>
</dbReference>
<dbReference type="Reactome" id="R-DME-5676590">
    <property type="pathway name" value="NIK--&gt;noncanonical NF-kB signaling"/>
</dbReference>
<dbReference type="Reactome" id="R-DME-5689603">
    <property type="pathway name" value="UCH proteinases"/>
</dbReference>
<dbReference type="Reactome" id="R-DME-5689880">
    <property type="pathway name" value="Ub-specific processing proteases"/>
</dbReference>
<dbReference type="Reactome" id="R-DME-68949">
    <property type="pathway name" value="Orc1 removal from chromatin"/>
</dbReference>
<dbReference type="Reactome" id="R-DME-69017">
    <property type="pathway name" value="CDK-mediated phosphorylation and removal of Cdc6"/>
</dbReference>
<dbReference type="Reactome" id="R-DME-69601">
    <property type="pathway name" value="Ubiquitin Mediated Degradation of Phosphorylated Cdc25A"/>
</dbReference>
<dbReference type="Reactome" id="R-DME-75815">
    <property type="pathway name" value="Ubiquitin-dependent degradation of Cyclin D"/>
</dbReference>
<dbReference type="Reactome" id="R-DME-8854050">
    <property type="pathway name" value="FBXL7 down-regulates AURKA during mitotic entry and in early mitosis"/>
</dbReference>
<dbReference type="Reactome" id="R-DME-8939236">
    <property type="pathway name" value="RUNX1 regulates transcription of genes involved in differentiation of HSCs"/>
</dbReference>
<dbReference type="Reactome" id="R-DME-8939902">
    <property type="pathway name" value="Regulation of RUNX2 expression and activity"/>
</dbReference>
<dbReference type="Reactome" id="R-DME-8941858">
    <property type="pathway name" value="Regulation of RUNX3 expression and activity"/>
</dbReference>
<dbReference type="Reactome" id="R-DME-8948751">
    <property type="pathway name" value="Regulation of PTEN stability and activity"/>
</dbReference>
<dbReference type="Reactome" id="R-DME-8951664">
    <property type="pathway name" value="Neddylation"/>
</dbReference>
<dbReference type="Reactome" id="R-DME-9020702">
    <property type="pathway name" value="Interleukin-1 signaling"/>
</dbReference>
<dbReference type="Reactome" id="R-DME-9755511">
    <property type="pathway name" value="KEAP1-NFE2L2 pathway"/>
</dbReference>
<dbReference type="Reactome" id="R-DME-9762114">
    <property type="pathway name" value="GSK3B and BTRC:CUL1-mediated-degradation of NFE2L2"/>
</dbReference>
<dbReference type="Reactome" id="R-DME-983168">
    <property type="pathway name" value="Antigen processing: Ubiquitination &amp; Proteasome degradation"/>
</dbReference>
<dbReference type="Reactome" id="R-DME-9907900">
    <property type="pathway name" value="Proteasome assembly"/>
</dbReference>
<dbReference type="SignaLink" id="P48601"/>
<dbReference type="BioGRID-ORCS" id="42828">
    <property type="hits" value="0 hits in 1 CRISPR screen"/>
</dbReference>
<dbReference type="ChiTaRS" id="Rpt2">
    <property type="organism name" value="fly"/>
</dbReference>
<dbReference type="GenomeRNAi" id="42828"/>
<dbReference type="PRO" id="PR:P48601"/>
<dbReference type="Proteomes" id="UP000000803">
    <property type="component" value="Chromosome 3R"/>
</dbReference>
<dbReference type="Bgee" id="FBgn0015282">
    <property type="expression patterns" value="Expressed in secondary oocyte and 168 other cell types or tissues"/>
</dbReference>
<dbReference type="ExpressionAtlas" id="P48601">
    <property type="expression patterns" value="baseline and differential"/>
</dbReference>
<dbReference type="GO" id="GO:0005829">
    <property type="term" value="C:cytosol"/>
    <property type="evidence" value="ECO:0000304"/>
    <property type="project" value="Reactome"/>
</dbReference>
<dbReference type="GO" id="GO:0005654">
    <property type="term" value="C:nucleoplasm"/>
    <property type="evidence" value="ECO:0000304"/>
    <property type="project" value="Reactome"/>
</dbReference>
<dbReference type="GO" id="GO:0005838">
    <property type="term" value="C:proteasome regulatory particle"/>
    <property type="evidence" value="ECO:0000314"/>
    <property type="project" value="FlyBase"/>
</dbReference>
<dbReference type="GO" id="GO:0008540">
    <property type="term" value="C:proteasome regulatory particle, base subcomplex"/>
    <property type="evidence" value="ECO:0000314"/>
    <property type="project" value="FlyBase"/>
</dbReference>
<dbReference type="GO" id="GO:0005524">
    <property type="term" value="F:ATP binding"/>
    <property type="evidence" value="ECO:0007669"/>
    <property type="project" value="UniProtKB-KW"/>
</dbReference>
<dbReference type="GO" id="GO:0016887">
    <property type="term" value="F:ATP hydrolysis activity"/>
    <property type="evidence" value="ECO:0007669"/>
    <property type="project" value="InterPro"/>
</dbReference>
<dbReference type="GO" id="GO:0036402">
    <property type="term" value="F:proteasome-activating activity"/>
    <property type="evidence" value="ECO:0000255"/>
    <property type="project" value="FlyBase"/>
</dbReference>
<dbReference type="GO" id="GO:0043161">
    <property type="term" value="P:proteasome-mediated ubiquitin-dependent protein catabolic process"/>
    <property type="evidence" value="ECO:0000315"/>
    <property type="project" value="FlyBase"/>
</dbReference>
<dbReference type="CDD" id="cd19502">
    <property type="entry name" value="RecA-like_PAN_like"/>
    <property type="match status" value="1"/>
</dbReference>
<dbReference type="FunFam" id="2.40.50.140:FF:000067">
    <property type="entry name" value="26S protease regulatory subunit 4"/>
    <property type="match status" value="1"/>
</dbReference>
<dbReference type="FunFam" id="1.10.8.60:FF:000007">
    <property type="entry name" value="26S proteasome regulatory subunit 4"/>
    <property type="match status" value="1"/>
</dbReference>
<dbReference type="FunFam" id="3.40.50.300:FF:000039">
    <property type="entry name" value="26S proteasome regulatory subunit 4"/>
    <property type="match status" value="1"/>
</dbReference>
<dbReference type="Gene3D" id="1.10.8.60">
    <property type="match status" value="1"/>
</dbReference>
<dbReference type="Gene3D" id="2.40.50.140">
    <property type="entry name" value="Nucleic acid-binding proteins"/>
    <property type="match status" value="1"/>
</dbReference>
<dbReference type="Gene3D" id="3.40.50.300">
    <property type="entry name" value="P-loop containing nucleotide triphosphate hydrolases"/>
    <property type="match status" value="1"/>
</dbReference>
<dbReference type="InterPro" id="IPR050221">
    <property type="entry name" value="26S_Proteasome_ATPase"/>
</dbReference>
<dbReference type="InterPro" id="IPR003593">
    <property type="entry name" value="AAA+_ATPase"/>
</dbReference>
<dbReference type="InterPro" id="IPR041569">
    <property type="entry name" value="AAA_lid_3"/>
</dbReference>
<dbReference type="InterPro" id="IPR003959">
    <property type="entry name" value="ATPase_AAA_core"/>
</dbReference>
<dbReference type="InterPro" id="IPR003960">
    <property type="entry name" value="ATPase_AAA_CS"/>
</dbReference>
<dbReference type="InterPro" id="IPR012340">
    <property type="entry name" value="NA-bd_OB-fold"/>
</dbReference>
<dbReference type="InterPro" id="IPR027417">
    <property type="entry name" value="P-loop_NTPase"/>
</dbReference>
<dbReference type="InterPro" id="IPR032501">
    <property type="entry name" value="Prot_ATP_ID_OB_2nd"/>
</dbReference>
<dbReference type="PANTHER" id="PTHR23073">
    <property type="entry name" value="26S PROTEASOME REGULATORY SUBUNIT"/>
    <property type="match status" value="1"/>
</dbReference>
<dbReference type="Pfam" id="PF00004">
    <property type="entry name" value="AAA"/>
    <property type="match status" value="1"/>
</dbReference>
<dbReference type="Pfam" id="PF17862">
    <property type="entry name" value="AAA_lid_3"/>
    <property type="match status" value="1"/>
</dbReference>
<dbReference type="Pfam" id="PF16450">
    <property type="entry name" value="Prot_ATP_ID_OB_C"/>
    <property type="match status" value="1"/>
</dbReference>
<dbReference type="SMART" id="SM00382">
    <property type="entry name" value="AAA"/>
    <property type="match status" value="1"/>
</dbReference>
<dbReference type="SUPFAM" id="SSF52540">
    <property type="entry name" value="P-loop containing nucleoside triphosphate hydrolases"/>
    <property type="match status" value="1"/>
</dbReference>
<dbReference type="PROSITE" id="PS00674">
    <property type="entry name" value="AAA"/>
    <property type="match status" value="1"/>
</dbReference>
<keyword id="KW-0067">ATP-binding</keyword>
<keyword id="KW-0963">Cytoplasm</keyword>
<keyword id="KW-0547">Nucleotide-binding</keyword>
<keyword id="KW-0539">Nucleus</keyword>
<keyword id="KW-0647">Proteasome</keyword>
<keyword id="KW-1185">Reference proteome</keyword>
<comment type="function">
    <text evidence="1">The 26S proteasome is involved in the ATP-dependent degradation of ubiquitinated proteins. The regulatory (or ATPase) complex confers ATP dependency and substrate specificity to the 26S complex (By similarity).</text>
</comment>
<comment type="subunit">
    <text evidence="4">Interacts with PSMD5.</text>
</comment>
<comment type="interaction">
    <interactant intactId="EBI-189117">
        <id>P48601</id>
    </interactant>
    <interactant intactId="EBI-183209">
        <id>P12881</id>
        <label>Prosalpha6</label>
    </interactant>
    <organismsDiffer>false</organismsDiffer>
    <experiments>3</experiments>
</comment>
<comment type="interaction">
    <interactant intactId="EBI-189117">
        <id>P48601</id>
    </interactant>
    <interactant intactId="EBI-155674">
        <id>Q9W414</id>
        <label>Rpt4</label>
    </interactant>
    <organismsDiffer>false</organismsDiffer>
    <experiments>3</experiments>
</comment>
<comment type="subcellular location">
    <subcellularLocation>
        <location evidence="1">Cytoplasm</location>
    </subcellularLocation>
    <subcellularLocation>
        <location evidence="1">Nucleus</location>
    </subcellularLocation>
</comment>
<comment type="similarity">
    <text evidence="5">Belongs to the AAA ATPase family.</text>
</comment>
<proteinExistence type="evidence at protein level"/>
<protein>
    <recommendedName>
        <fullName>26S proteasome regulatory subunit 4</fullName>
        <shortName>P26s4</shortName>
    </recommendedName>
</protein>
<reference key="1">
    <citation type="journal article" date="1996" name="Genomics">
        <title>Genomic organization and mapping of the mouse P26s4 ATPase gene: a member of the remarkably conserved AAA gene family.</title>
        <authorList>
            <person name="Hoyle J."/>
            <person name="Fisher E.M.C."/>
        </authorList>
    </citation>
    <scope>NUCLEOTIDE SEQUENCE [MRNA]</scope>
</reference>
<reference key="2">
    <citation type="journal article" date="2000" name="Science">
        <title>The genome sequence of Drosophila melanogaster.</title>
        <authorList>
            <person name="Adams M.D."/>
            <person name="Celniker S.E."/>
            <person name="Holt R.A."/>
            <person name="Evans C.A."/>
            <person name="Gocayne J.D."/>
            <person name="Amanatides P.G."/>
            <person name="Scherer S.E."/>
            <person name="Li P.W."/>
            <person name="Hoskins R.A."/>
            <person name="Galle R.F."/>
            <person name="George R.A."/>
            <person name="Lewis S.E."/>
            <person name="Richards S."/>
            <person name="Ashburner M."/>
            <person name="Henderson S.N."/>
            <person name="Sutton G.G."/>
            <person name="Wortman J.R."/>
            <person name="Yandell M.D."/>
            <person name="Zhang Q."/>
            <person name="Chen L.X."/>
            <person name="Brandon R.C."/>
            <person name="Rogers Y.-H.C."/>
            <person name="Blazej R.G."/>
            <person name="Champe M."/>
            <person name="Pfeiffer B.D."/>
            <person name="Wan K.H."/>
            <person name="Doyle C."/>
            <person name="Baxter E.G."/>
            <person name="Helt G."/>
            <person name="Nelson C.R."/>
            <person name="Miklos G.L.G."/>
            <person name="Abril J.F."/>
            <person name="Agbayani A."/>
            <person name="An H.-J."/>
            <person name="Andrews-Pfannkoch C."/>
            <person name="Baldwin D."/>
            <person name="Ballew R.M."/>
            <person name="Basu A."/>
            <person name="Baxendale J."/>
            <person name="Bayraktaroglu L."/>
            <person name="Beasley E.M."/>
            <person name="Beeson K.Y."/>
            <person name="Benos P.V."/>
            <person name="Berman B.P."/>
            <person name="Bhandari D."/>
            <person name="Bolshakov S."/>
            <person name="Borkova D."/>
            <person name="Botchan M.R."/>
            <person name="Bouck J."/>
            <person name="Brokstein P."/>
            <person name="Brottier P."/>
            <person name="Burtis K.C."/>
            <person name="Busam D.A."/>
            <person name="Butler H."/>
            <person name="Cadieu E."/>
            <person name="Center A."/>
            <person name="Chandra I."/>
            <person name="Cherry J.M."/>
            <person name="Cawley S."/>
            <person name="Dahlke C."/>
            <person name="Davenport L.B."/>
            <person name="Davies P."/>
            <person name="de Pablos B."/>
            <person name="Delcher A."/>
            <person name="Deng Z."/>
            <person name="Mays A.D."/>
            <person name="Dew I."/>
            <person name="Dietz S.M."/>
            <person name="Dodson K."/>
            <person name="Doup L.E."/>
            <person name="Downes M."/>
            <person name="Dugan-Rocha S."/>
            <person name="Dunkov B.C."/>
            <person name="Dunn P."/>
            <person name="Durbin K.J."/>
            <person name="Evangelista C.C."/>
            <person name="Ferraz C."/>
            <person name="Ferriera S."/>
            <person name="Fleischmann W."/>
            <person name="Fosler C."/>
            <person name="Gabrielian A.E."/>
            <person name="Garg N.S."/>
            <person name="Gelbart W.M."/>
            <person name="Glasser K."/>
            <person name="Glodek A."/>
            <person name="Gong F."/>
            <person name="Gorrell J.H."/>
            <person name="Gu Z."/>
            <person name="Guan P."/>
            <person name="Harris M."/>
            <person name="Harris N.L."/>
            <person name="Harvey D.A."/>
            <person name="Heiman T.J."/>
            <person name="Hernandez J.R."/>
            <person name="Houck J."/>
            <person name="Hostin D."/>
            <person name="Houston K.A."/>
            <person name="Howland T.J."/>
            <person name="Wei M.-H."/>
            <person name="Ibegwam C."/>
            <person name="Jalali M."/>
            <person name="Kalush F."/>
            <person name="Karpen G.H."/>
            <person name="Ke Z."/>
            <person name="Kennison J.A."/>
            <person name="Ketchum K.A."/>
            <person name="Kimmel B.E."/>
            <person name="Kodira C.D."/>
            <person name="Kraft C.L."/>
            <person name="Kravitz S."/>
            <person name="Kulp D."/>
            <person name="Lai Z."/>
            <person name="Lasko P."/>
            <person name="Lei Y."/>
            <person name="Levitsky A.A."/>
            <person name="Li J.H."/>
            <person name="Li Z."/>
            <person name="Liang Y."/>
            <person name="Lin X."/>
            <person name="Liu X."/>
            <person name="Mattei B."/>
            <person name="McIntosh T.C."/>
            <person name="McLeod M.P."/>
            <person name="McPherson D."/>
            <person name="Merkulov G."/>
            <person name="Milshina N.V."/>
            <person name="Mobarry C."/>
            <person name="Morris J."/>
            <person name="Moshrefi A."/>
            <person name="Mount S.M."/>
            <person name="Moy M."/>
            <person name="Murphy B."/>
            <person name="Murphy L."/>
            <person name="Muzny D.M."/>
            <person name="Nelson D.L."/>
            <person name="Nelson D.R."/>
            <person name="Nelson K.A."/>
            <person name="Nixon K."/>
            <person name="Nusskern D.R."/>
            <person name="Pacleb J.M."/>
            <person name="Palazzolo M."/>
            <person name="Pittman G.S."/>
            <person name="Pan S."/>
            <person name="Pollard J."/>
            <person name="Puri V."/>
            <person name="Reese M.G."/>
            <person name="Reinert K."/>
            <person name="Remington K."/>
            <person name="Saunders R.D.C."/>
            <person name="Scheeler F."/>
            <person name="Shen H."/>
            <person name="Shue B.C."/>
            <person name="Siden-Kiamos I."/>
            <person name="Simpson M."/>
            <person name="Skupski M.P."/>
            <person name="Smith T.J."/>
            <person name="Spier E."/>
            <person name="Spradling A.C."/>
            <person name="Stapleton M."/>
            <person name="Strong R."/>
            <person name="Sun E."/>
            <person name="Svirskas R."/>
            <person name="Tector C."/>
            <person name="Turner R."/>
            <person name="Venter E."/>
            <person name="Wang A.H."/>
            <person name="Wang X."/>
            <person name="Wang Z.-Y."/>
            <person name="Wassarman D.A."/>
            <person name="Weinstock G.M."/>
            <person name="Weissenbach J."/>
            <person name="Williams S.M."/>
            <person name="Woodage T."/>
            <person name="Worley K.C."/>
            <person name="Wu D."/>
            <person name="Yang S."/>
            <person name="Yao Q.A."/>
            <person name="Ye J."/>
            <person name="Yeh R.-F."/>
            <person name="Zaveri J.S."/>
            <person name="Zhan M."/>
            <person name="Zhang G."/>
            <person name="Zhao Q."/>
            <person name="Zheng L."/>
            <person name="Zheng X.H."/>
            <person name="Zhong F.N."/>
            <person name="Zhong W."/>
            <person name="Zhou X."/>
            <person name="Zhu S.C."/>
            <person name="Zhu X."/>
            <person name="Smith H.O."/>
            <person name="Gibbs R.A."/>
            <person name="Myers E.W."/>
            <person name="Rubin G.M."/>
            <person name="Venter J.C."/>
        </authorList>
    </citation>
    <scope>NUCLEOTIDE SEQUENCE [LARGE SCALE GENOMIC DNA]</scope>
    <source>
        <strain>Berkeley</strain>
    </source>
</reference>
<reference key="3">
    <citation type="journal article" date="2002" name="Genome Biol.">
        <title>Annotation of the Drosophila melanogaster euchromatic genome: a systematic review.</title>
        <authorList>
            <person name="Misra S."/>
            <person name="Crosby M.A."/>
            <person name="Mungall C.J."/>
            <person name="Matthews B.B."/>
            <person name="Campbell K.S."/>
            <person name="Hradecky P."/>
            <person name="Huang Y."/>
            <person name="Kaminker J.S."/>
            <person name="Millburn G.H."/>
            <person name="Prochnik S.E."/>
            <person name="Smith C.D."/>
            <person name="Tupy J.L."/>
            <person name="Whitfield E.J."/>
            <person name="Bayraktaroglu L."/>
            <person name="Berman B.P."/>
            <person name="Bettencourt B.R."/>
            <person name="Celniker S.E."/>
            <person name="de Grey A.D.N.J."/>
            <person name="Drysdale R.A."/>
            <person name="Harris N.L."/>
            <person name="Richter J."/>
            <person name="Russo S."/>
            <person name="Schroeder A.J."/>
            <person name="Shu S.Q."/>
            <person name="Stapleton M."/>
            <person name="Yamada C."/>
            <person name="Ashburner M."/>
            <person name="Gelbart W.M."/>
            <person name="Rubin G.M."/>
            <person name="Lewis S.E."/>
        </authorList>
    </citation>
    <scope>GENOME REANNOTATION</scope>
    <source>
        <strain>Berkeley</strain>
    </source>
</reference>
<reference key="4">
    <citation type="journal article" date="2002" name="Genome Biol.">
        <title>A Drosophila full-length cDNA resource.</title>
        <authorList>
            <person name="Stapleton M."/>
            <person name="Carlson J.W."/>
            <person name="Brokstein P."/>
            <person name="Yu C."/>
            <person name="Champe M."/>
            <person name="George R.A."/>
            <person name="Guarin H."/>
            <person name="Kronmiller B."/>
            <person name="Pacleb J.M."/>
            <person name="Park S."/>
            <person name="Wan K.H."/>
            <person name="Rubin G.M."/>
            <person name="Celniker S.E."/>
        </authorList>
    </citation>
    <scope>NUCLEOTIDE SEQUENCE [LARGE SCALE MRNA]</scope>
    <source>
        <strain>Berkeley</strain>
        <tissue>Embryo</tissue>
    </source>
</reference>
<reference key="5">
    <citation type="journal article" date="2013" name="Cell">
        <title>Proteasome regulation by ADP-ribosylation.</title>
        <authorList>
            <person name="Cho-Park P.F."/>
            <person name="Steller H."/>
        </authorList>
    </citation>
    <scope>INTERACTION WITH PSMD5</scope>
</reference>
<feature type="chain" id="PRO_0000084682" description="26S proteasome regulatory subunit 4">
    <location>
        <begin position="1"/>
        <end position="439"/>
    </location>
</feature>
<feature type="region of interest" description="Disordered" evidence="3">
    <location>
        <begin position="1"/>
        <end position="48"/>
    </location>
</feature>
<feature type="region of interest" description="Disordered" evidence="3">
    <location>
        <begin position="82"/>
        <end position="104"/>
    </location>
</feature>
<feature type="compositionally biased region" description="Basic and acidic residues" evidence="3">
    <location>
        <begin position="12"/>
        <end position="25"/>
    </location>
</feature>
<feature type="compositionally biased region" description="Basic and acidic residues" evidence="3">
    <location>
        <begin position="82"/>
        <end position="102"/>
    </location>
</feature>
<feature type="binding site" evidence="2">
    <location>
        <begin position="225"/>
        <end position="232"/>
    </location>
    <ligand>
        <name>ATP</name>
        <dbReference type="ChEBI" id="CHEBI:30616"/>
    </ligand>
</feature>
<feature type="sequence conflict" description="In Ref. 1; AAB34134." evidence="5" ref="1">
    <original>C</original>
    <variation>A</variation>
    <location>
        <position position="57"/>
    </location>
</feature>
<feature type="sequence conflict" description="In Ref. 1; AAB34134." evidence="5" ref="1">
    <original>V</original>
    <variation>M</variation>
    <location>
        <position position="172"/>
    </location>
</feature>